<accession>A0K476</accession>
<name>COQ7_BURCH</name>
<gene>
    <name evidence="1" type="primary">coq7</name>
    <name type="ordered locus">Bcen2424_0549</name>
</gene>
<reference key="1">
    <citation type="submission" date="2006-08" db="EMBL/GenBank/DDBJ databases">
        <title>Complete sequence of chromosome 1 of Burkholderia cenocepacia HI2424.</title>
        <authorList>
            <person name="Copeland A."/>
            <person name="Lucas S."/>
            <person name="Lapidus A."/>
            <person name="Barry K."/>
            <person name="Detter J.C."/>
            <person name="Glavina del Rio T."/>
            <person name="Hammon N."/>
            <person name="Israni S."/>
            <person name="Pitluck S."/>
            <person name="Chain P."/>
            <person name="Malfatti S."/>
            <person name="Shin M."/>
            <person name="Vergez L."/>
            <person name="Schmutz J."/>
            <person name="Larimer F."/>
            <person name="Land M."/>
            <person name="Hauser L."/>
            <person name="Kyrpides N."/>
            <person name="Kim E."/>
            <person name="LiPuma J.J."/>
            <person name="Gonzalez C.F."/>
            <person name="Konstantinidis K."/>
            <person name="Tiedje J.M."/>
            <person name="Richardson P."/>
        </authorList>
    </citation>
    <scope>NUCLEOTIDE SEQUENCE [LARGE SCALE GENOMIC DNA]</scope>
    <source>
        <strain>HI2424</strain>
    </source>
</reference>
<keyword id="KW-1003">Cell membrane</keyword>
<keyword id="KW-0408">Iron</keyword>
<keyword id="KW-0472">Membrane</keyword>
<keyword id="KW-0479">Metal-binding</keyword>
<keyword id="KW-0503">Monooxygenase</keyword>
<keyword id="KW-0560">Oxidoreductase</keyword>
<keyword id="KW-0831">Ubiquinone biosynthesis</keyword>
<feature type="chain" id="PRO_0000338664" description="3-demethoxyubiquinol 3-hydroxylase">
    <location>
        <begin position="1"/>
        <end position="208"/>
    </location>
</feature>
<feature type="binding site" evidence="1">
    <location>
        <position position="57"/>
    </location>
    <ligand>
        <name>Fe cation</name>
        <dbReference type="ChEBI" id="CHEBI:24875"/>
        <label>1</label>
    </ligand>
</feature>
<feature type="binding site" evidence="1">
    <location>
        <position position="87"/>
    </location>
    <ligand>
        <name>Fe cation</name>
        <dbReference type="ChEBI" id="CHEBI:24875"/>
        <label>1</label>
    </ligand>
</feature>
<feature type="binding site" evidence="1">
    <location>
        <position position="87"/>
    </location>
    <ligand>
        <name>Fe cation</name>
        <dbReference type="ChEBI" id="CHEBI:24875"/>
        <label>2</label>
    </ligand>
</feature>
<feature type="binding site" evidence="1">
    <location>
        <position position="90"/>
    </location>
    <ligand>
        <name>Fe cation</name>
        <dbReference type="ChEBI" id="CHEBI:24875"/>
        <label>1</label>
    </ligand>
</feature>
<feature type="binding site" evidence="1">
    <location>
        <position position="139"/>
    </location>
    <ligand>
        <name>Fe cation</name>
        <dbReference type="ChEBI" id="CHEBI:24875"/>
        <label>2</label>
    </ligand>
</feature>
<feature type="binding site" evidence="1">
    <location>
        <position position="171"/>
    </location>
    <ligand>
        <name>Fe cation</name>
        <dbReference type="ChEBI" id="CHEBI:24875"/>
        <label>1</label>
    </ligand>
</feature>
<feature type="binding site" evidence="1">
    <location>
        <position position="171"/>
    </location>
    <ligand>
        <name>Fe cation</name>
        <dbReference type="ChEBI" id="CHEBI:24875"/>
        <label>2</label>
    </ligand>
</feature>
<feature type="binding site" evidence="1">
    <location>
        <position position="174"/>
    </location>
    <ligand>
        <name>Fe cation</name>
        <dbReference type="ChEBI" id="CHEBI:24875"/>
        <label>2</label>
    </ligand>
</feature>
<protein>
    <recommendedName>
        <fullName evidence="1">3-demethoxyubiquinol 3-hydroxylase</fullName>
        <shortName evidence="1">DMQ hydroxylase</shortName>
        <ecNumber evidence="1">1.14.99.60</ecNumber>
    </recommendedName>
    <alternativeName>
        <fullName evidence="1">2-nonaprenyl-3-methyl-6-methoxy-1,4-benzoquinol hydroxylase</fullName>
    </alternativeName>
</protein>
<evidence type="ECO:0000255" key="1">
    <source>
        <dbReference type="HAMAP-Rule" id="MF_01658"/>
    </source>
</evidence>
<dbReference type="EC" id="1.14.99.60" evidence="1"/>
<dbReference type="EMBL" id="CP000458">
    <property type="protein sequence ID" value="ABK07303.1"/>
    <property type="molecule type" value="Genomic_DNA"/>
</dbReference>
<dbReference type="RefSeq" id="WP_006477026.1">
    <property type="nucleotide sequence ID" value="NC_008542.1"/>
</dbReference>
<dbReference type="SMR" id="A0K476"/>
<dbReference type="GeneID" id="83047321"/>
<dbReference type="KEGG" id="bch:Bcen2424_0549"/>
<dbReference type="HOGENOM" id="CLU_088601_0_0_4"/>
<dbReference type="UniPathway" id="UPA00232"/>
<dbReference type="GO" id="GO:0005886">
    <property type="term" value="C:plasma membrane"/>
    <property type="evidence" value="ECO:0007669"/>
    <property type="project" value="UniProtKB-SubCell"/>
</dbReference>
<dbReference type="GO" id="GO:0008682">
    <property type="term" value="F:3-demethoxyubiquinol 3-hydroxylase activity"/>
    <property type="evidence" value="ECO:0007669"/>
    <property type="project" value="UniProtKB-EC"/>
</dbReference>
<dbReference type="GO" id="GO:0046872">
    <property type="term" value="F:metal ion binding"/>
    <property type="evidence" value="ECO:0007669"/>
    <property type="project" value="UniProtKB-KW"/>
</dbReference>
<dbReference type="GO" id="GO:0006744">
    <property type="term" value="P:ubiquinone biosynthetic process"/>
    <property type="evidence" value="ECO:0007669"/>
    <property type="project" value="UniProtKB-UniRule"/>
</dbReference>
<dbReference type="CDD" id="cd01042">
    <property type="entry name" value="DMQH"/>
    <property type="match status" value="1"/>
</dbReference>
<dbReference type="Gene3D" id="1.20.1260.10">
    <property type="match status" value="1"/>
</dbReference>
<dbReference type="HAMAP" id="MF_01658">
    <property type="entry name" value="COQ7"/>
    <property type="match status" value="1"/>
</dbReference>
<dbReference type="InterPro" id="IPR047809">
    <property type="entry name" value="COQ7_proteobact"/>
</dbReference>
<dbReference type="InterPro" id="IPR012347">
    <property type="entry name" value="Ferritin-like"/>
</dbReference>
<dbReference type="InterPro" id="IPR009078">
    <property type="entry name" value="Ferritin-like_SF"/>
</dbReference>
<dbReference type="InterPro" id="IPR011566">
    <property type="entry name" value="Ubq_synth_Coq7"/>
</dbReference>
<dbReference type="NCBIfam" id="NF033656">
    <property type="entry name" value="DMQ_monoox_COQ7"/>
    <property type="match status" value="1"/>
</dbReference>
<dbReference type="PANTHER" id="PTHR11237:SF4">
    <property type="entry name" value="5-DEMETHOXYUBIQUINONE HYDROXYLASE, MITOCHONDRIAL"/>
    <property type="match status" value="1"/>
</dbReference>
<dbReference type="PANTHER" id="PTHR11237">
    <property type="entry name" value="COENZYME Q10 BIOSYNTHESIS PROTEIN 7"/>
    <property type="match status" value="1"/>
</dbReference>
<dbReference type="Pfam" id="PF03232">
    <property type="entry name" value="COQ7"/>
    <property type="match status" value="1"/>
</dbReference>
<dbReference type="SUPFAM" id="SSF47240">
    <property type="entry name" value="Ferritin-like"/>
    <property type="match status" value="1"/>
</dbReference>
<sequence length="208" mass="22619">MVLDELISEFDRGLRSLTGISRMSRPVPVPADTPDVELTPAERTHAAGLMRVNHVGEVCAQALYQAQKLTARTASAKAMFEEAAREEEDHLAWTAHRLKELDSRPSLLNPLWYAGALAIGVAAGTLGDKVSLGFMAETERQVESHLEGHMSELPPTDTASRAIVDQMRIDEVKHGKAATDAGGIELPLPARMLMRAASKVMTSTAYYL</sequence>
<comment type="function">
    <text evidence="1">Catalyzes the hydroxylation of 2-nonaprenyl-3-methyl-6-methoxy-1,4-benzoquinol during ubiquinone biosynthesis.</text>
</comment>
<comment type="catalytic activity">
    <reaction evidence="1">
        <text>a 5-methoxy-2-methyl-3-(all-trans-polyprenyl)benzene-1,4-diol + AH2 + O2 = a 3-demethylubiquinol + A + H2O</text>
        <dbReference type="Rhea" id="RHEA:50908"/>
        <dbReference type="Rhea" id="RHEA-COMP:10859"/>
        <dbReference type="Rhea" id="RHEA-COMP:10914"/>
        <dbReference type="ChEBI" id="CHEBI:13193"/>
        <dbReference type="ChEBI" id="CHEBI:15377"/>
        <dbReference type="ChEBI" id="CHEBI:15379"/>
        <dbReference type="ChEBI" id="CHEBI:17499"/>
        <dbReference type="ChEBI" id="CHEBI:84167"/>
        <dbReference type="ChEBI" id="CHEBI:84422"/>
        <dbReference type="EC" id="1.14.99.60"/>
    </reaction>
</comment>
<comment type="cofactor">
    <cofactor evidence="1">
        <name>Fe cation</name>
        <dbReference type="ChEBI" id="CHEBI:24875"/>
    </cofactor>
    <text evidence="1">Binds 2 iron ions per subunit.</text>
</comment>
<comment type="pathway">
    <text evidence="1">Cofactor biosynthesis; ubiquinone biosynthesis.</text>
</comment>
<comment type="subcellular location">
    <subcellularLocation>
        <location evidence="1">Cell membrane</location>
        <topology evidence="1">Peripheral membrane protein</topology>
    </subcellularLocation>
</comment>
<comment type="similarity">
    <text evidence="1">Belongs to the COQ7 family.</text>
</comment>
<organism>
    <name type="scientific">Burkholderia cenocepacia (strain HI2424)</name>
    <dbReference type="NCBI Taxonomy" id="331272"/>
    <lineage>
        <taxon>Bacteria</taxon>
        <taxon>Pseudomonadati</taxon>
        <taxon>Pseudomonadota</taxon>
        <taxon>Betaproteobacteria</taxon>
        <taxon>Burkholderiales</taxon>
        <taxon>Burkholderiaceae</taxon>
        <taxon>Burkholderia</taxon>
        <taxon>Burkholderia cepacia complex</taxon>
    </lineage>
</organism>
<proteinExistence type="inferred from homology"/>